<protein>
    <recommendedName>
        <fullName evidence="1">5-oxoprolinase subunit A</fullName>
        <shortName evidence="1">5-OPase subunit A</shortName>
        <ecNumber evidence="1">3.5.2.9</ecNumber>
    </recommendedName>
    <alternativeName>
        <fullName evidence="1">5-oxoprolinase (ATP-hydrolyzing) subunit A</fullName>
    </alternativeName>
</protein>
<organism>
    <name type="scientific">Fusobacterium nucleatum subsp. nucleatum (strain ATCC 25586 / DSM 15643 / BCRC 10681 / CIP 101130 / JCM 8532 / KCTC 2640 / LMG 13131 / VPI 4355)</name>
    <dbReference type="NCBI Taxonomy" id="190304"/>
    <lineage>
        <taxon>Bacteria</taxon>
        <taxon>Fusobacteriati</taxon>
        <taxon>Fusobacteriota</taxon>
        <taxon>Fusobacteriia</taxon>
        <taxon>Fusobacteriales</taxon>
        <taxon>Fusobacteriaceae</taxon>
        <taxon>Fusobacterium</taxon>
    </lineage>
</organism>
<accession>Q8RG75</accession>
<proteinExistence type="inferred from homology"/>
<sequence>MKFFVDLNSDIGEGYGAYKLGMDEEIMKCVTSVNCACGWHAGDPLIMDKTIKIAKENNVAVGAHPGYPDLLGFGRRKMVVTPDEARAYMLYQLGALNAFAKANETKLQHMKLHGAFYNMAAVEKDLADAVLDGIEQFDKDIIVMTLSGSYMAKEGKRRGLKVAEEVFADRGYNPDGTLVNRNLPGAFVKEPDEAIARVIKMIKTKKVTAVNGEEIDIAADSICVHGDNPKAIEFVDRIRKSLIADGIEVKSLYEFIK</sequence>
<reference key="1">
    <citation type="journal article" date="2002" name="J. Bacteriol.">
        <title>Genome sequence and analysis of the oral bacterium Fusobacterium nucleatum strain ATCC 25586.</title>
        <authorList>
            <person name="Kapatral V."/>
            <person name="Anderson I."/>
            <person name="Ivanova N."/>
            <person name="Reznik G."/>
            <person name="Los T."/>
            <person name="Lykidis A."/>
            <person name="Bhattacharyya A."/>
            <person name="Bartman A."/>
            <person name="Gardner W."/>
            <person name="Grechkin G."/>
            <person name="Zhu L."/>
            <person name="Vasieva O."/>
            <person name="Chu L."/>
            <person name="Kogan Y."/>
            <person name="Chaga O."/>
            <person name="Goltsman E."/>
            <person name="Bernal A."/>
            <person name="Larsen N."/>
            <person name="D'Souza M."/>
            <person name="Walunas T."/>
            <person name="Pusch G."/>
            <person name="Haselkorn R."/>
            <person name="Fonstein M."/>
            <person name="Kyrpides N.C."/>
            <person name="Overbeek R."/>
        </authorList>
    </citation>
    <scope>NUCLEOTIDE SEQUENCE [LARGE SCALE GENOMIC DNA]</scope>
    <source>
        <strain>ATCC 25586 / DSM 15643 / BCRC 10681 / CIP 101130 / JCM 8532 / KCTC 2640 / LMG 13131 / VPI 4355</strain>
    </source>
</reference>
<comment type="function">
    <text evidence="1">Catalyzes the cleavage of 5-oxoproline to form L-glutamate coupled to the hydrolysis of ATP to ADP and inorganic phosphate.</text>
</comment>
<comment type="catalytic activity">
    <reaction evidence="1">
        <text>5-oxo-L-proline + ATP + 2 H2O = L-glutamate + ADP + phosphate + H(+)</text>
        <dbReference type="Rhea" id="RHEA:10348"/>
        <dbReference type="ChEBI" id="CHEBI:15377"/>
        <dbReference type="ChEBI" id="CHEBI:15378"/>
        <dbReference type="ChEBI" id="CHEBI:29985"/>
        <dbReference type="ChEBI" id="CHEBI:30616"/>
        <dbReference type="ChEBI" id="CHEBI:43474"/>
        <dbReference type="ChEBI" id="CHEBI:58402"/>
        <dbReference type="ChEBI" id="CHEBI:456216"/>
        <dbReference type="EC" id="3.5.2.9"/>
    </reaction>
</comment>
<comment type="subunit">
    <text evidence="1">Forms a complex composed of PxpA, PxpB and PxpC.</text>
</comment>
<comment type="similarity">
    <text evidence="1">Belongs to the LamB/PxpA family.</text>
</comment>
<name>PXPA_FUSNN</name>
<feature type="chain" id="PRO_0000185011" description="5-oxoprolinase subunit A">
    <location>
        <begin position="1"/>
        <end position="257"/>
    </location>
</feature>
<gene>
    <name evidence="1" type="primary">pxpA</name>
    <name type="ordered locus">FN0439</name>
</gene>
<keyword id="KW-0067">ATP-binding</keyword>
<keyword id="KW-0378">Hydrolase</keyword>
<keyword id="KW-0547">Nucleotide-binding</keyword>
<keyword id="KW-1185">Reference proteome</keyword>
<evidence type="ECO:0000255" key="1">
    <source>
        <dbReference type="HAMAP-Rule" id="MF_00691"/>
    </source>
</evidence>
<dbReference type="EC" id="3.5.2.9" evidence="1"/>
<dbReference type="EMBL" id="AE009951">
    <property type="protein sequence ID" value="AAL94638.1"/>
    <property type="molecule type" value="Genomic_DNA"/>
</dbReference>
<dbReference type="RefSeq" id="NP_603339.1">
    <property type="nucleotide sequence ID" value="NC_003454.1"/>
</dbReference>
<dbReference type="RefSeq" id="WP_011016390.1">
    <property type="nucleotide sequence ID" value="NZ_CP028101.1"/>
</dbReference>
<dbReference type="SMR" id="Q8RG75"/>
<dbReference type="FunCoup" id="Q8RG75">
    <property type="interactions" value="16"/>
</dbReference>
<dbReference type="STRING" id="190304.FN0439"/>
<dbReference type="PaxDb" id="190304-FN0439"/>
<dbReference type="EnsemblBacteria" id="AAL94638">
    <property type="protein sequence ID" value="AAL94638"/>
    <property type="gene ID" value="FN0439"/>
</dbReference>
<dbReference type="GeneID" id="79783449"/>
<dbReference type="KEGG" id="fnu:FN0439"/>
<dbReference type="PATRIC" id="fig|190304.8.peg.1012"/>
<dbReference type="eggNOG" id="COG1540">
    <property type="taxonomic scope" value="Bacteria"/>
</dbReference>
<dbReference type="HOGENOM" id="CLU_069535_0_0_0"/>
<dbReference type="InParanoid" id="Q8RG75"/>
<dbReference type="BioCyc" id="FNUC190304:G1FZS-1033-MONOMER"/>
<dbReference type="Proteomes" id="UP000002521">
    <property type="component" value="Chromosome"/>
</dbReference>
<dbReference type="GO" id="GO:0017168">
    <property type="term" value="F:5-oxoprolinase (ATP-hydrolyzing) activity"/>
    <property type="evidence" value="ECO:0007669"/>
    <property type="project" value="UniProtKB-UniRule"/>
</dbReference>
<dbReference type="GO" id="GO:0005524">
    <property type="term" value="F:ATP binding"/>
    <property type="evidence" value="ECO:0007669"/>
    <property type="project" value="UniProtKB-UniRule"/>
</dbReference>
<dbReference type="GO" id="GO:0005975">
    <property type="term" value="P:carbohydrate metabolic process"/>
    <property type="evidence" value="ECO:0007669"/>
    <property type="project" value="InterPro"/>
</dbReference>
<dbReference type="CDD" id="cd10787">
    <property type="entry name" value="LamB_YcsF_like"/>
    <property type="match status" value="1"/>
</dbReference>
<dbReference type="Gene3D" id="3.20.20.370">
    <property type="entry name" value="Glycoside hydrolase/deacetylase"/>
    <property type="match status" value="1"/>
</dbReference>
<dbReference type="HAMAP" id="MF_00691">
    <property type="entry name" value="PxpA"/>
    <property type="match status" value="1"/>
</dbReference>
<dbReference type="InterPro" id="IPR011330">
    <property type="entry name" value="Glyco_hydro/deAcase_b/a-brl"/>
</dbReference>
<dbReference type="InterPro" id="IPR005501">
    <property type="entry name" value="LamB/YcsF/PxpA-like"/>
</dbReference>
<dbReference type="NCBIfam" id="NF003814">
    <property type="entry name" value="PRK05406.1-3"/>
    <property type="match status" value="1"/>
</dbReference>
<dbReference type="NCBIfam" id="NF003816">
    <property type="entry name" value="PRK05406.1-5"/>
    <property type="match status" value="1"/>
</dbReference>
<dbReference type="PANTHER" id="PTHR30292:SF0">
    <property type="entry name" value="5-OXOPROLINASE SUBUNIT A"/>
    <property type="match status" value="1"/>
</dbReference>
<dbReference type="PANTHER" id="PTHR30292">
    <property type="entry name" value="UNCHARACTERIZED PROTEIN YBGL-RELATED"/>
    <property type="match status" value="1"/>
</dbReference>
<dbReference type="Pfam" id="PF03746">
    <property type="entry name" value="LamB_YcsF"/>
    <property type="match status" value="1"/>
</dbReference>
<dbReference type="SUPFAM" id="SSF88713">
    <property type="entry name" value="Glycoside hydrolase/deacetylase"/>
    <property type="match status" value="1"/>
</dbReference>